<name>RL27_PHEZH</name>
<proteinExistence type="inferred from homology"/>
<dbReference type="EMBL" id="CP000747">
    <property type="protein sequence ID" value="ACG76671.1"/>
    <property type="molecule type" value="Genomic_DNA"/>
</dbReference>
<dbReference type="RefSeq" id="WP_012520819.1">
    <property type="nucleotide sequence ID" value="NC_011144.1"/>
</dbReference>
<dbReference type="SMR" id="B4RD67"/>
<dbReference type="STRING" id="450851.PHZ_c0257"/>
<dbReference type="KEGG" id="pzu:PHZ_c0257"/>
<dbReference type="eggNOG" id="COG0211">
    <property type="taxonomic scope" value="Bacteria"/>
</dbReference>
<dbReference type="HOGENOM" id="CLU_095424_4_1_5"/>
<dbReference type="OrthoDB" id="9803474at2"/>
<dbReference type="Proteomes" id="UP000001868">
    <property type="component" value="Chromosome"/>
</dbReference>
<dbReference type="GO" id="GO:0022625">
    <property type="term" value="C:cytosolic large ribosomal subunit"/>
    <property type="evidence" value="ECO:0007669"/>
    <property type="project" value="TreeGrafter"/>
</dbReference>
<dbReference type="GO" id="GO:0003735">
    <property type="term" value="F:structural constituent of ribosome"/>
    <property type="evidence" value="ECO:0007669"/>
    <property type="project" value="InterPro"/>
</dbReference>
<dbReference type="GO" id="GO:0006412">
    <property type="term" value="P:translation"/>
    <property type="evidence" value="ECO:0007669"/>
    <property type="project" value="UniProtKB-UniRule"/>
</dbReference>
<dbReference type="FunFam" id="2.40.50.100:FF:000020">
    <property type="entry name" value="50S ribosomal protein L27"/>
    <property type="match status" value="1"/>
</dbReference>
<dbReference type="Gene3D" id="2.40.50.100">
    <property type="match status" value="1"/>
</dbReference>
<dbReference type="HAMAP" id="MF_00539">
    <property type="entry name" value="Ribosomal_bL27"/>
    <property type="match status" value="1"/>
</dbReference>
<dbReference type="InterPro" id="IPR001684">
    <property type="entry name" value="Ribosomal_bL27"/>
</dbReference>
<dbReference type="InterPro" id="IPR018261">
    <property type="entry name" value="Ribosomal_bL27_CS"/>
</dbReference>
<dbReference type="NCBIfam" id="TIGR00062">
    <property type="entry name" value="L27"/>
    <property type="match status" value="1"/>
</dbReference>
<dbReference type="PANTHER" id="PTHR15893:SF0">
    <property type="entry name" value="LARGE RIBOSOMAL SUBUNIT PROTEIN BL27M"/>
    <property type="match status" value="1"/>
</dbReference>
<dbReference type="PANTHER" id="PTHR15893">
    <property type="entry name" value="RIBOSOMAL PROTEIN L27"/>
    <property type="match status" value="1"/>
</dbReference>
<dbReference type="Pfam" id="PF01016">
    <property type="entry name" value="Ribosomal_L27"/>
    <property type="match status" value="1"/>
</dbReference>
<dbReference type="PRINTS" id="PR00063">
    <property type="entry name" value="RIBOSOMALL27"/>
</dbReference>
<dbReference type="SUPFAM" id="SSF110324">
    <property type="entry name" value="Ribosomal L27 protein-like"/>
    <property type="match status" value="1"/>
</dbReference>
<dbReference type="PROSITE" id="PS00831">
    <property type="entry name" value="RIBOSOMAL_L27"/>
    <property type="match status" value="1"/>
</dbReference>
<reference key="1">
    <citation type="journal article" date="2008" name="BMC Genomics">
        <title>Complete genome of Phenylobacterium zucineum - a novel facultative intracellular bacterium isolated from human erythroleukemia cell line K562.</title>
        <authorList>
            <person name="Luo Y."/>
            <person name="Xu X."/>
            <person name="Ding Z."/>
            <person name="Liu Z."/>
            <person name="Zhang B."/>
            <person name="Yan Z."/>
            <person name="Sun J."/>
            <person name="Hu S."/>
            <person name="Hu X."/>
        </authorList>
    </citation>
    <scope>NUCLEOTIDE SEQUENCE [LARGE SCALE GENOMIC DNA]</scope>
    <source>
        <strain>HLK1</strain>
    </source>
</reference>
<sequence length="91" mass="9661">MAHKKSGGSSRNGRDSAGRRLGVKKFGGEAINAGGIIVRQRGTKFWPGENVGMGKDHTLFALATGAVKFVTKRDNRTYATVVPANEVMAAE</sequence>
<feature type="chain" id="PRO_1000128786" description="Large ribosomal subunit protein bL27">
    <location>
        <begin position="1"/>
        <end position="91"/>
    </location>
</feature>
<feature type="region of interest" description="Disordered" evidence="2">
    <location>
        <begin position="1"/>
        <end position="21"/>
    </location>
</feature>
<organism>
    <name type="scientific">Phenylobacterium zucineum (strain HLK1)</name>
    <dbReference type="NCBI Taxonomy" id="450851"/>
    <lineage>
        <taxon>Bacteria</taxon>
        <taxon>Pseudomonadati</taxon>
        <taxon>Pseudomonadota</taxon>
        <taxon>Alphaproteobacteria</taxon>
        <taxon>Caulobacterales</taxon>
        <taxon>Caulobacteraceae</taxon>
        <taxon>Phenylobacterium</taxon>
    </lineage>
</organism>
<gene>
    <name evidence="1" type="primary">rpmA</name>
    <name type="ordered locus">PHZ_c0257</name>
</gene>
<protein>
    <recommendedName>
        <fullName evidence="1">Large ribosomal subunit protein bL27</fullName>
    </recommendedName>
    <alternativeName>
        <fullName evidence="3">50S ribosomal protein L27</fullName>
    </alternativeName>
</protein>
<evidence type="ECO:0000255" key="1">
    <source>
        <dbReference type="HAMAP-Rule" id="MF_00539"/>
    </source>
</evidence>
<evidence type="ECO:0000256" key="2">
    <source>
        <dbReference type="SAM" id="MobiDB-lite"/>
    </source>
</evidence>
<evidence type="ECO:0000305" key="3"/>
<keyword id="KW-1185">Reference proteome</keyword>
<keyword id="KW-0687">Ribonucleoprotein</keyword>
<keyword id="KW-0689">Ribosomal protein</keyword>
<accession>B4RD67</accession>
<comment type="similarity">
    <text evidence="1">Belongs to the bacterial ribosomal protein bL27 family.</text>
</comment>